<name>VG75_EHV2</name>
<feature type="chain" id="PRO_0000405989" description="Probable membrane antigen 75">
    <location>
        <begin position="1"/>
        <end position="1345"/>
    </location>
</feature>
<accession>Q66675</accession>
<dbReference type="EMBL" id="U20824">
    <property type="protein sequence ID" value="AAC13863.1"/>
    <property type="molecule type" value="Genomic_DNA"/>
</dbReference>
<dbReference type="PIR" id="S55669">
    <property type="entry name" value="S55669"/>
</dbReference>
<dbReference type="SMR" id="Q66675"/>
<dbReference type="KEGG" id="vg:1461076"/>
<dbReference type="Proteomes" id="UP000007083">
    <property type="component" value="Segment"/>
</dbReference>
<dbReference type="GO" id="GO:0043657">
    <property type="term" value="C:host cell"/>
    <property type="evidence" value="ECO:0007669"/>
    <property type="project" value="GOC"/>
</dbReference>
<dbReference type="GO" id="GO:0019033">
    <property type="term" value="C:viral tegument"/>
    <property type="evidence" value="ECO:0007669"/>
    <property type="project" value="UniProtKB-SubCell"/>
</dbReference>
<dbReference type="GO" id="GO:0004642">
    <property type="term" value="F:phosphoribosylformylglycinamidine synthase activity"/>
    <property type="evidence" value="ECO:0007669"/>
    <property type="project" value="TreeGrafter"/>
</dbReference>
<dbReference type="GO" id="GO:0075733">
    <property type="term" value="P:intracellular transport of virus"/>
    <property type="evidence" value="ECO:0007669"/>
    <property type="project" value="InterPro"/>
</dbReference>
<dbReference type="GO" id="GO:0006164">
    <property type="term" value="P:purine nucleotide biosynthetic process"/>
    <property type="evidence" value="ECO:0007669"/>
    <property type="project" value="TreeGrafter"/>
</dbReference>
<dbReference type="Gene3D" id="3.40.50.880">
    <property type="match status" value="1"/>
</dbReference>
<dbReference type="Gene3D" id="3.90.650.10">
    <property type="entry name" value="PurM-like C-terminal domain"/>
    <property type="match status" value="1"/>
</dbReference>
<dbReference type="Gene3D" id="3.30.1330.10">
    <property type="entry name" value="PurM-like, N-terminal domain"/>
    <property type="match status" value="1"/>
</dbReference>
<dbReference type="InterPro" id="IPR029062">
    <property type="entry name" value="Class_I_gatase-like"/>
</dbReference>
<dbReference type="InterPro" id="IPR010077">
    <property type="entry name" value="Herpes_virus_tegument"/>
</dbReference>
<dbReference type="InterPro" id="IPR010918">
    <property type="entry name" value="PurM-like_C_dom"/>
</dbReference>
<dbReference type="InterPro" id="IPR036676">
    <property type="entry name" value="PurM-like_C_sf"/>
</dbReference>
<dbReference type="InterPro" id="IPR036921">
    <property type="entry name" value="PurM-like_N_sf"/>
</dbReference>
<dbReference type="InterPro" id="IPR024346">
    <property type="entry name" value="Tegument_herpes_virus_N"/>
</dbReference>
<dbReference type="NCBIfam" id="TIGR01739">
    <property type="entry name" value="tegu_FGAM_synt"/>
    <property type="match status" value="1"/>
</dbReference>
<dbReference type="PANTHER" id="PTHR10099">
    <property type="entry name" value="PHOSPHORIBOSYLFORMYLGLYCINAMIDINE SYNTHASE"/>
    <property type="match status" value="1"/>
</dbReference>
<dbReference type="PANTHER" id="PTHR10099:SF1">
    <property type="entry name" value="PHOSPHORIBOSYLFORMYLGLYCINAMIDINE SYNTHASE"/>
    <property type="match status" value="1"/>
</dbReference>
<dbReference type="Pfam" id="PF02769">
    <property type="entry name" value="AIRS_C"/>
    <property type="match status" value="1"/>
</dbReference>
<dbReference type="Pfam" id="PF13507">
    <property type="entry name" value="GATase_5"/>
    <property type="match status" value="1"/>
</dbReference>
<dbReference type="Pfam" id="PF12818">
    <property type="entry name" value="Tegument_dsDNA"/>
    <property type="match status" value="1"/>
</dbReference>
<dbReference type="SMART" id="SM01211">
    <property type="entry name" value="GATase_5"/>
    <property type="match status" value="1"/>
</dbReference>
<dbReference type="SUPFAM" id="SSF52317">
    <property type="entry name" value="Class I glutamine amidotransferase-like"/>
    <property type="match status" value="1"/>
</dbReference>
<dbReference type="SUPFAM" id="SSF56042">
    <property type="entry name" value="PurM C-terminal domain-like"/>
    <property type="match status" value="1"/>
</dbReference>
<dbReference type="SUPFAM" id="SSF55326">
    <property type="entry name" value="PurM N-terminal domain-like"/>
    <property type="match status" value="1"/>
</dbReference>
<organism>
    <name type="scientific">Equine herpesvirus 2 (strain 86/87)</name>
    <name type="common">EHV-2</name>
    <dbReference type="NCBI Taxonomy" id="82831"/>
    <lineage>
        <taxon>Viruses</taxon>
        <taxon>Duplodnaviria</taxon>
        <taxon>Heunggongvirae</taxon>
        <taxon>Peploviricota</taxon>
        <taxon>Herviviricetes</taxon>
        <taxon>Herpesvirales</taxon>
        <taxon>Orthoherpesviridae</taxon>
        <taxon>Gammaherpesvirinae</taxon>
        <taxon>Percavirus</taxon>
        <taxon>Percavirus equidgamma2</taxon>
        <taxon>Equid gammaherpesvirus 2</taxon>
    </lineage>
</organism>
<proteinExistence type="predicted"/>
<organismHost>
    <name type="scientific">Equus caballus</name>
    <name type="common">Horse</name>
    <dbReference type="NCBI Taxonomy" id="9796"/>
</organismHost>
<evidence type="ECO:0000305" key="1"/>
<sequence length="1345" mass="145098">MASDVTQLLPGIPYRHENQELRVYYADSEFSPAEGRFVFNYTGRAGDLTLLRGRSDAEHLLVVILRNGSGDEDLRPLHAPELRLLHFILAPEVRYSHLDPRSRLEGGGDRSLTFDYGPALYRRVSTDAFELGRVLTLIDCRSLLRVELGRHFVTRLAQYIGEDEMRVVHEALVNDTSVQRWTLGGAAQRGEVPATALTPAAEGGAFVMRDPVSIYLMLPRPDNAMPLGIQASTAASPLVRQYIILTTPGTMSVFPWGSVPKNPSVREAVTHLHSEATSMGQPQLQGQVFQLSLLPFYRVSGAACGVYSVTPSVASGYEDAVHGEIRETHEAHARCLNHSGVPVTCGFLRTFDETSAPLSLNTLVCTSTLATCPVSMLTTSRFMRGQYIVALGDFLPVGGPDAPPYVYRSSSFLCNTIVNTLNMFGKTRARICISGTSRQVGFASTHAHLGSLLPRGGAVLYLSKLPQEALSQIRGRGVSREDLRELVNRFYLRVSSHQVFLVLKDEPVGDQGRQGYQFLQKAAGLNGCAFRVLGRTCDQEGLHFVDDLGEGGGGEVPPRRMGYSPEGAAFSLPFESPVKKTTREYAEGVDVQRGMTLVQEGALEWDMFTPYATVHAVLSHPTVASKEYFVRRVDRFSNGLVRQQQGVGALDLPLADYCLVVDPAVETFTGTSFSREAHEASAPLENISVQEALELADAPERWFDSNGGAAARRPVPGHVLACGEQGYKMINSGVLGGQYGITEVVTNIMLGPAFELAQLQITAAVHWNEGPDYRAQLERAVMACREFCAELGVGLAFSSGCSSAKYGGPSHSPPGPDSLNLISFAGKARVDTSAPRLTPELHGPGHVLIHLSVNREVLVAGSVFEHKMTGLRHPLPPVEAHRVRNMFQCVQALVARGLVTAGHDVSDGGLIACCAEMALAGQCGVTLDIQRGIHPLLVLFSETPGAVLEVPLGNLAGVLEACEPFGCFVNQIGTVEPRTGEGHVVVTQGGSVVFRDSLANVMNSWTSFADEQFSRFGACLKEAEMYRKDYGDNELDAGSLEDACAGGELTLYRSPGRRVGAAVLCLPGCTEPLAALHALVNSGFEVSVVGPEDLASSRDGLGAFAGLVVSGVTGARANYAASRGLVQGLVAERAARETVLVFLNRTGTFSLGLGELGMEFLCAFGVFDGAAAGGGGEGGGEVGRGLTDQSFGNRLIELEANASELPESLWLNFRVPWNTRSVALRHLAGNILPCWAYGTHLGVRYRADGLEYSLDALGMIALHYHGRRAQDWNFARNYPRNPTAVSTVAGLCSRDGRHLGLLCDPSAAYHPWQWQHVPRRVAGLRTSPWAVLFHTLFLDTLKSMS</sequence>
<gene>
    <name type="primary">75</name>
</gene>
<keyword id="KW-1185">Reference proteome</keyword>
<keyword id="KW-0946">Virion</keyword>
<keyword id="KW-0920">Virion tegument</keyword>
<protein>
    <recommendedName>
        <fullName>Probable membrane antigen 75</fullName>
    </recommendedName>
    <alternativeName>
        <fullName>Tegument protein</fullName>
    </alternativeName>
</protein>
<comment type="subcellular location">
    <subcellularLocation>
        <location evidence="1">Virion tegument</location>
    </subcellularLocation>
</comment>
<reference key="1">
    <citation type="journal article" date="1995" name="J. Mol. Biol.">
        <title>The DNA sequence of equine herpesvirus 2.</title>
        <authorList>
            <person name="Telford E.A.R."/>
            <person name="Watson M.S."/>
            <person name="Aird H.C."/>
            <person name="Perry J."/>
            <person name="Davison A.J."/>
        </authorList>
    </citation>
    <scope>NUCLEOTIDE SEQUENCE [LARGE SCALE GENOMIC DNA]</scope>
</reference>